<gene>
    <name type="primary">MT-CYB</name>
    <name type="synonym">COB</name>
    <name type="synonym">CYTB</name>
    <name type="synonym">MTCYB</name>
</gene>
<evidence type="ECO:0000250" key="1"/>
<evidence type="ECO:0000250" key="2">
    <source>
        <dbReference type="UniProtKB" id="P00157"/>
    </source>
</evidence>
<evidence type="ECO:0000255" key="3">
    <source>
        <dbReference type="PROSITE-ProRule" id="PRU00967"/>
    </source>
</evidence>
<evidence type="ECO:0000255" key="4">
    <source>
        <dbReference type="PROSITE-ProRule" id="PRU00968"/>
    </source>
</evidence>
<comment type="function">
    <text evidence="2">Component of the ubiquinol-cytochrome c reductase complex (complex III or cytochrome b-c1 complex) that is part of the mitochondrial respiratory chain. The b-c1 complex mediates electron transfer from ubiquinol to cytochrome c. Contributes to the generation of a proton gradient across the mitochondrial membrane that is then used for ATP synthesis.</text>
</comment>
<comment type="cofactor">
    <cofactor evidence="2">
        <name>heme b</name>
        <dbReference type="ChEBI" id="CHEBI:60344"/>
    </cofactor>
    <text evidence="2">Binds 2 heme b groups non-covalently.</text>
</comment>
<comment type="subunit">
    <text evidence="2">The cytochrome bc1 complex contains 11 subunits: 3 respiratory subunits (MT-CYB, CYC1 and UQCRFS1), 2 core proteins (UQCRC1 and UQCRC2) and 6 low-molecular weight proteins (UQCRH/QCR6, UQCRB/QCR7, UQCRQ/QCR8, UQCR10/QCR9, UQCR11/QCR10 and a cleavage product of UQCRFS1). This cytochrome bc1 complex then forms a dimer.</text>
</comment>
<comment type="subcellular location">
    <subcellularLocation>
        <location evidence="2">Mitochondrion inner membrane</location>
        <topology evidence="2">Multi-pass membrane protein</topology>
    </subcellularLocation>
</comment>
<comment type="miscellaneous">
    <text evidence="1">Heme 1 (or BL or b562) is low-potential and absorbs at about 562 nm, and heme 2 (or BH or b566) is high-potential and absorbs at about 566 nm.</text>
</comment>
<comment type="similarity">
    <text evidence="3 4">Belongs to the cytochrome b family.</text>
</comment>
<comment type="caution">
    <text evidence="2">The full-length protein contains only eight transmembrane helices, not nine as predicted by bioinformatics tools.</text>
</comment>
<protein>
    <recommendedName>
        <fullName>Cytochrome b</fullName>
    </recommendedName>
    <alternativeName>
        <fullName>Complex III subunit 3</fullName>
    </alternativeName>
    <alternativeName>
        <fullName>Complex III subunit III</fullName>
    </alternativeName>
    <alternativeName>
        <fullName>Cytochrome b-c1 complex subunit 3</fullName>
    </alternativeName>
    <alternativeName>
        <fullName>Ubiquinol-cytochrome-c reductase complex cytochrome b subunit</fullName>
    </alternativeName>
</protein>
<dbReference type="EMBL" id="AF108667">
    <property type="protein sequence ID" value="AAD45449.1"/>
    <property type="molecule type" value="Genomic_DNA"/>
</dbReference>
<dbReference type="SMR" id="Q9XNX7"/>
<dbReference type="GO" id="GO:0005743">
    <property type="term" value="C:mitochondrial inner membrane"/>
    <property type="evidence" value="ECO:0007669"/>
    <property type="project" value="UniProtKB-SubCell"/>
</dbReference>
<dbReference type="GO" id="GO:0045275">
    <property type="term" value="C:respiratory chain complex III"/>
    <property type="evidence" value="ECO:0007669"/>
    <property type="project" value="InterPro"/>
</dbReference>
<dbReference type="GO" id="GO:0046872">
    <property type="term" value="F:metal ion binding"/>
    <property type="evidence" value="ECO:0007669"/>
    <property type="project" value="UniProtKB-KW"/>
</dbReference>
<dbReference type="GO" id="GO:0008121">
    <property type="term" value="F:ubiquinol-cytochrome-c reductase activity"/>
    <property type="evidence" value="ECO:0007669"/>
    <property type="project" value="InterPro"/>
</dbReference>
<dbReference type="GO" id="GO:0006122">
    <property type="term" value="P:mitochondrial electron transport, ubiquinol to cytochrome c"/>
    <property type="evidence" value="ECO:0007669"/>
    <property type="project" value="TreeGrafter"/>
</dbReference>
<dbReference type="CDD" id="cd00290">
    <property type="entry name" value="cytochrome_b_C"/>
    <property type="match status" value="1"/>
</dbReference>
<dbReference type="CDD" id="cd00284">
    <property type="entry name" value="Cytochrome_b_N"/>
    <property type="match status" value="1"/>
</dbReference>
<dbReference type="FunFam" id="1.20.810.10:FF:000002">
    <property type="entry name" value="Cytochrome b"/>
    <property type="match status" value="1"/>
</dbReference>
<dbReference type="Gene3D" id="1.20.810.10">
    <property type="entry name" value="Cytochrome Bc1 Complex, Chain C"/>
    <property type="match status" value="1"/>
</dbReference>
<dbReference type="InterPro" id="IPR005798">
    <property type="entry name" value="Cyt_b/b6_C"/>
</dbReference>
<dbReference type="InterPro" id="IPR036150">
    <property type="entry name" value="Cyt_b/b6_C_sf"/>
</dbReference>
<dbReference type="InterPro" id="IPR005797">
    <property type="entry name" value="Cyt_b/b6_N"/>
</dbReference>
<dbReference type="InterPro" id="IPR027387">
    <property type="entry name" value="Cytb/b6-like_sf"/>
</dbReference>
<dbReference type="InterPro" id="IPR030689">
    <property type="entry name" value="Cytochrome_b"/>
</dbReference>
<dbReference type="InterPro" id="IPR048260">
    <property type="entry name" value="Cytochrome_b_C_euk/bac"/>
</dbReference>
<dbReference type="InterPro" id="IPR048259">
    <property type="entry name" value="Cytochrome_b_N_euk/bac"/>
</dbReference>
<dbReference type="InterPro" id="IPR016174">
    <property type="entry name" value="Di-haem_cyt_TM"/>
</dbReference>
<dbReference type="PANTHER" id="PTHR19271">
    <property type="entry name" value="CYTOCHROME B"/>
    <property type="match status" value="1"/>
</dbReference>
<dbReference type="PANTHER" id="PTHR19271:SF16">
    <property type="entry name" value="CYTOCHROME B"/>
    <property type="match status" value="1"/>
</dbReference>
<dbReference type="Pfam" id="PF00032">
    <property type="entry name" value="Cytochrom_B_C"/>
    <property type="match status" value="1"/>
</dbReference>
<dbReference type="Pfam" id="PF00033">
    <property type="entry name" value="Cytochrome_B"/>
    <property type="match status" value="1"/>
</dbReference>
<dbReference type="PIRSF" id="PIRSF038885">
    <property type="entry name" value="COB"/>
    <property type="match status" value="1"/>
</dbReference>
<dbReference type="SUPFAM" id="SSF81648">
    <property type="entry name" value="a domain/subunit of cytochrome bc1 complex (Ubiquinol-cytochrome c reductase)"/>
    <property type="match status" value="1"/>
</dbReference>
<dbReference type="SUPFAM" id="SSF81342">
    <property type="entry name" value="Transmembrane di-heme cytochromes"/>
    <property type="match status" value="1"/>
</dbReference>
<dbReference type="PROSITE" id="PS51003">
    <property type="entry name" value="CYTB_CTER"/>
    <property type="match status" value="1"/>
</dbReference>
<dbReference type="PROSITE" id="PS51002">
    <property type="entry name" value="CYTB_NTER"/>
    <property type="match status" value="1"/>
</dbReference>
<geneLocation type="mitochondrion"/>
<accession>Q9XNX7</accession>
<feature type="chain" id="PRO_0000255107" description="Cytochrome b">
    <location>
        <begin position="1"/>
        <end position="380"/>
    </location>
</feature>
<feature type="transmembrane region" description="Helical" evidence="2">
    <location>
        <begin position="33"/>
        <end position="53"/>
    </location>
</feature>
<feature type="transmembrane region" description="Helical" evidence="2">
    <location>
        <begin position="77"/>
        <end position="98"/>
    </location>
</feature>
<feature type="transmembrane region" description="Helical" evidence="2">
    <location>
        <begin position="113"/>
        <end position="133"/>
    </location>
</feature>
<feature type="transmembrane region" description="Helical" evidence="2">
    <location>
        <begin position="178"/>
        <end position="198"/>
    </location>
</feature>
<feature type="transmembrane region" description="Helical" evidence="2">
    <location>
        <begin position="226"/>
        <end position="246"/>
    </location>
</feature>
<feature type="transmembrane region" description="Helical" evidence="2">
    <location>
        <begin position="288"/>
        <end position="308"/>
    </location>
</feature>
<feature type="transmembrane region" description="Helical" evidence="2">
    <location>
        <begin position="320"/>
        <end position="340"/>
    </location>
</feature>
<feature type="transmembrane region" description="Helical" evidence="2">
    <location>
        <begin position="347"/>
        <end position="367"/>
    </location>
</feature>
<feature type="binding site" description="axial binding residue" evidence="2">
    <location>
        <position position="83"/>
    </location>
    <ligand>
        <name>heme b</name>
        <dbReference type="ChEBI" id="CHEBI:60344"/>
        <label>b562</label>
    </ligand>
    <ligandPart>
        <name>Fe</name>
        <dbReference type="ChEBI" id="CHEBI:18248"/>
    </ligandPart>
</feature>
<feature type="binding site" description="axial binding residue" evidence="2">
    <location>
        <position position="97"/>
    </location>
    <ligand>
        <name>heme b</name>
        <dbReference type="ChEBI" id="CHEBI:60344"/>
        <label>b566</label>
    </ligand>
    <ligandPart>
        <name>Fe</name>
        <dbReference type="ChEBI" id="CHEBI:18248"/>
    </ligandPart>
</feature>
<feature type="binding site" description="axial binding residue" evidence="2">
    <location>
        <position position="182"/>
    </location>
    <ligand>
        <name>heme b</name>
        <dbReference type="ChEBI" id="CHEBI:60344"/>
        <label>b562</label>
    </ligand>
    <ligandPart>
        <name>Fe</name>
        <dbReference type="ChEBI" id="CHEBI:18248"/>
    </ligandPart>
</feature>
<feature type="binding site" description="axial binding residue" evidence="2">
    <location>
        <position position="196"/>
    </location>
    <ligand>
        <name>heme b</name>
        <dbReference type="ChEBI" id="CHEBI:60344"/>
        <label>b566</label>
    </ligand>
    <ligandPart>
        <name>Fe</name>
        <dbReference type="ChEBI" id="CHEBI:18248"/>
    </ligandPart>
</feature>
<feature type="binding site" evidence="2">
    <location>
        <position position="201"/>
    </location>
    <ligand>
        <name>a ubiquinone</name>
        <dbReference type="ChEBI" id="CHEBI:16389"/>
    </ligand>
</feature>
<reference key="1">
    <citation type="journal article" date="1999" name="J. Mammal. Evol.">
        <title>Phylogenetic relationships and the radiation of Sigmodontine rodents in South America: evidence from cytochrome b.</title>
        <authorList>
            <person name="Smith M.F."/>
            <person name="Patton J.L."/>
        </authorList>
    </citation>
    <scope>NUCLEOTIDE SEQUENCE [GENOMIC DNA]</scope>
</reference>
<proteinExistence type="inferred from homology"/>
<organism>
    <name type="scientific">Oxymycterus iheringi</name>
    <name type="common">Ihering's hocicudo</name>
    <dbReference type="NCBI Taxonomy" id="89100"/>
    <lineage>
        <taxon>Eukaryota</taxon>
        <taxon>Metazoa</taxon>
        <taxon>Chordata</taxon>
        <taxon>Craniata</taxon>
        <taxon>Vertebrata</taxon>
        <taxon>Euteleostomi</taxon>
        <taxon>Mammalia</taxon>
        <taxon>Eutheria</taxon>
        <taxon>Euarchontoglires</taxon>
        <taxon>Glires</taxon>
        <taxon>Rodentia</taxon>
        <taxon>Myomorpha</taxon>
        <taxon>Muroidea</taxon>
        <taxon>Cricetidae</taxon>
        <taxon>Sigmodontinae</taxon>
        <taxon>Oxymycterus</taxon>
    </lineage>
</organism>
<name>CYB_OXYIH</name>
<sequence>MTIMRKNHPLLKIINHSFIDLPTPSNISSWWNFGSLLGICLMIQILTGLFLAMHYTSDTATAFSSVAHICRDVNYGWLIRYLHANGASMFFICLFIHVGRGIYYGSYMLSETWNIGIILFLTTMATAFVGYVLPWGQMSFWGATVITNLLSAIPYIGNTLVEWIWGGFSVDKATLNRFFAFHFILPFIIAAFALVHLLFLHETGSNNPSGLNSDSDKIPFHPYYTIKDLLGILLLLMILMILVLFFPDILGDPDNFTPANPLNTPAHIKPEWYFLFAYAILRSIPNKLGGVLALILSILILATFPLLNSSKQHGLIYRPITQVLFWVFIANLLILTWIGGQPVEYPFTTIGQIASILYFTIIIILMPIANMIENNILKLH</sequence>
<keyword id="KW-0249">Electron transport</keyword>
<keyword id="KW-0349">Heme</keyword>
<keyword id="KW-0408">Iron</keyword>
<keyword id="KW-0472">Membrane</keyword>
<keyword id="KW-0479">Metal-binding</keyword>
<keyword id="KW-0496">Mitochondrion</keyword>
<keyword id="KW-0999">Mitochondrion inner membrane</keyword>
<keyword id="KW-0679">Respiratory chain</keyword>
<keyword id="KW-0812">Transmembrane</keyword>
<keyword id="KW-1133">Transmembrane helix</keyword>
<keyword id="KW-0813">Transport</keyword>
<keyword id="KW-0830">Ubiquinone</keyword>